<comment type="function">
    <text evidence="1">Probable component of the PAM complex, a complex required for the translocation of transit peptide-containing proteins from the inner membrane into the mitochondrial matrix in an ATP-dependent manner. May act as a co-chaperone that stimulate the ATP-dependent activity (By similarity).</text>
</comment>
<comment type="subunit">
    <text evidence="1">Probable component of the PAM complex at least composed of a mitochondrial HSP70 protein, GrpE, tim-44, tim-16 and tim-14/dnj-21.</text>
</comment>
<comment type="subcellular location">
    <subcellularLocation>
        <location evidence="1">Mitochondrion inner membrane</location>
        <topology evidence="1">Single-pass membrane protein</topology>
    </subcellularLocation>
</comment>
<comment type="similarity">
    <text evidence="4">Belongs to the TIM14 family.</text>
</comment>
<sequence>MTGGLIVAGLGLAAVGFGARYVLRNQALIKKGMEAIPVAGGAFSNYYRGGFDQKMSRAEAAKILGVAPSAKPAKIKEAHKKVMIVNHPDRGGSPYLAAKINEAKDLMESSKS</sequence>
<organism>
    <name type="scientific">Caenorhabditis elegans</name>
    <dbReference type="NCBI Taxonomy" id="6239"/>
    <lineage>
        <taxon>Eukaryota</taxon>
        <taxon>Metazoa</taxon>
        <taxon>Ecdysozoa</taxon>
        <taxon>Nematoda</taxon>
        <taxon>Chromadorea</taxon>
        <taxon>Rhabditida</taxon>
        <taxon>Rhabditina</taxon>
        <taxon>Rhabditomorpha</taxon>
        <taxon>Rhabditoidea</taxon>
        <taxon>Rhabditidae</taxon>
        <taxon>Peloderinae</taxon>
        <taxon>Caenorhabditis</taxon>
    </lineage>
</organism>
<gene>
    <name type="primary">dnj-21</name>
    <name type="synonym">tim-14</name>
    <name type="ORF">T19B4.4</name>
</gene>
<accession>P91454</accession>
<feature type="chain" id="PRO_0000071105" description="Mitochondrial import inner membrane translocase subunit TIM14">
    <location>
        <begin position="1"/>
        <end position="112"/>
    </location>
</feature>
<feature type="topological domain" description="Mitochondrial intermembrane" evidence="2">
    <location>
        <begin position="1"/>
        <end position="3"/>
    </location>
</feature>
<feature type="transmembrane region" description="Helical" evidence="2">
    <location>
        <begin position="4"/>
        <end position="24"/>
    </location>
</feature>
<feature type="topological domain" description="Mitochondrial matrix" evidence="2">
    <location>
        <begin position="25"/>
        <end position="112"/>
    </location>
</feature>
<feature type="domain" description="J" evidence="3">
    <location>
        <begin position="59"/>
        <end position="112"/>
    </location>
</feature>
<protein>
    <recommendedName>
        <fullName>Mitochondrial import inner membrane translocase subunit TIM14</fullName>
    </recommendedName>
    <alternativeName>
        <fullName>DnaJ homolog subfamily C member 21</fullName>
    </alternativeName>
</protein>
<proteinExistence type="inferred from homology"/>
<reference key="1">
    <citation type="journal article" date="1998" name="Science">
        <title>Genome sequence of the nematode C. elegans: a platform for investigating biology.</title>
        <authorList>
            <consortium name="The C. elegans sequencing consortium"/>
        </authorList>
    </citation>
    <scope>NUCLEOTIDE SEQUENCE [LARGE SCALE GENOMIC DNA]</scope>
    <source>
        <strain>Bristol N2</strain>
    </source>
</reference>
<name>TIM14_CAEEL</name>
<evidence type="ECO:0000250" key="1"/>
<evidence type="ECO:0000255" key="2"/>
<evidence type="ECO:0000255" key="3">
    <source>
        <dbReference type="PROSITE-ProRule" id="PRU00286"/>
    </source>
</evidence>
<evidence type="ECO:0000305" key="4"/>
<keyword id="KW-0143">Chaperone</keyword>
<keyword id="KW-0472">Membrane</keyword>
<keyword id="KW-0496">Mitochondrion</keyword>
<keyword id="KW-0999">Mitochondrion inner membrane</keyword>
<keyword id="KW-0653">Protein transport</keyword>
<keyword id="KW-1185">Reference proteome</keyword>
<keyword id="KW-0811">Translocation</keyword>
<keyword id="KW-0812">Transmembrane</keyword>
<keyword id="KW-1133">Transmembrane helix</keyword>
<keyword id="KW-0813">Transport</keyword>
<dbReference type="EMBL" id="FO080338">
    <property type="protein sequence ID" value="CCD62976.1"/>
    <property type="molecule type" value="Genomic_DNA"/>
</dbReference>
<dbReference type="PIR" id="T25890">
    <property type="entry name" value="T25890"/>
</dbReference>
<dbReference type="RefSeq" id="NP_491662.1">
    <property type="nucleotide sequence ID" value="NM_059261.5"/>
</dbReference>
<dbReference type="SMR" id="P91454"/>
<dbReference type="BioGRID" id="37688">
    <property type="interactions" value="4"/>
</dbReference>
<dbReference type="FunCoup" id="P91454">
    <property type="interactions" value="2409"/>
</dbReference>
<dbReference type="STRING" id="6239.T19B4.4.1"/>
<dbReference type="PaxDb" id="6239-T19B4.4"/>
<dbReference type="PeptideAtlas" id="P91454"/>
<dbReference type="EnsemblMetazoa" id="T19B4.4.1">
    <property type="protein sequence ID" value="T19B4.4.1"/>
    <property type="gene ID" value="WBGene00001039"/>
</dbReference>
<dbReference type="GeneID" id="172231"/>
<dbReference type="KEGG" id="cel:CELE_T19B4.4"/>
<dbReference type="UCSC" id="T19B4.4">
    <property type="organism name" value="c. elegans"/>
</dbReference>
<dbReference type="AGR" id="WB:WBGene00001039"/>
<dbReference type="CTD" id="172231"/>
<dbReference type="WormBase" id="T19B4.4">
    <property type="protein sequence ID" value="CE13742"/>
    <property type="gene ID" value="WBGene00001039"/>
    <property type="gene designation" value="dnj-21"/>
</dbReference>
<dbReference type="eggNOG" id="KOG0723">
    <property type="taxonomic scope" value="Eukaryota"/>
</dbReference>
<dbReference type="GeneTree" id="ENSGT00940000171836"/>
<dbReference type="HOGENOM" id="CLU_017633_13_3_1"/>
<dbReference type="InParanoid" id="P91454"/>
<dbReference type="OMA" id="ANSMSKY"/>
<dbReference type="OrthoDB" id="240298at2759"/>
<dbReference type="PhylomeDB" id="P91454"/>
<dbReference type="PRO" id="PR:P91454"/>
<dbReference type="Proteomes" id="UP000001940">
    <property type="component" value="Chromosome I"/>
</dbReference>
<dbReference type="Bgee" id="WBGene00001039">
    <property type="expression patterns" value="Expressed in pharyngeal muscle cell (C elegans) and 4 other cell types or tissues"/>
</dbReference>
<dbReference type="GO" id="GO:0005739">
    <property type="term" value="C:mitochondrion"/>
    <property type="evidence" value="ECO:0007005"/>
    <property type="project" value="WormBase"/>
</dbReference>
<dbReference type="GO" id="GO:0001405">
    <property type="term" value="C:PAM complex, Tim23 associated import motor"/>
    <property type="evidence" value="ECO:0000318"/>
    <property type="project" value="GO_Central"/>
</dbReference>
<dbReference type="GO" id="GO:0001671">
    <property type="term" value="F:ATPase activator activity"/>
    <property type="evidence" value="ECO:0000318"/>
    <property type="project" value="GO_Central"/>
</dbReference>
<dbReference type="GO" id="GO:0030150">
    <property type="term" value="P:protein import into mitochondrial matrix"/>
    <property type="evidence" value="ECO:0000318"/>
    <property type="project" value="GO_Central"/>
</dbReference>
<dbReference type="CDD" id="cd06257">
    <property type="entry name" value="DnaJ"/>
    <property type="match status" value="1"/>
</dbReference>
<dbReference type="FunFam" id="1.10.287.110:FF:000001">
    <property type="entry name" value="Import inner membrane translocase subunit tim14"/>
    <property type="match status" value="1"/>
</dbReference>
<dbReference type="Gene3D" id="1.10.287.110">
    <property type="entry name" value="DnaJ domain"/>
    <property type="match status" value="1"/>
</dbReference>
<dbReference type="InterPro" id="IPR001623">
    <property type="entry name" value="DnaJ_domain"/>
</dbReference>
<dbReference type="InterPro" id="IPR036869">
    <property type="entry name" value="J_dom_sf"/>
</dbReference>
<dbReference type="PANTHER" id="PTHR12763">
    <property type="match status" value="1"/>
</dbReference>
<dbReference type="PANTHER" id="PTHR12763:SF28">
    <property type="entry name" value="GEO10507P1-RELATED"/>
    <property type="match status" value="1"/>
</dbReference>
<dbReference type="SMART" id="SM00271">
    <property type="entry name" value="DnaJ"/>
    <property type="match status" value="1"/>
</dbReference>
<dbReference type="SUPFAM" id="SSF46565">
    <property type="entry name" value="Chaperone J-domain"/>
    <property type="match status" value="1"/>
</dbReference>
<dbReference type="PROSITE" id="PS50076">
    <property type="entry name" value="DNAJ_2"/>
    <property type="match status" value="1"/>
</dbReference>